<evidence type="ECO:0000255" key="1">
    <source>
        <dbReference type="HAMAP-Rule" id="MF_00558"/>
    </source>
</evidence>
<dbReference type="EC" id="6.2.1.5" evidence="1"/>
<dbReference type="EMBL" id="CP000109">
    <property type="protein sequence ID" value="ABB41969.1"/>
    <property type="molecule type" value="Genomic_DNA"/>
</dbReference>
<dbReference type="SMR" id="Q31FV4"/>
<dbReference type="STRING" id="317025.Tcr_1374"/>
<dbReference type="KEGG" id="tcx:Tcr_1374"/>
<dbReference type="eggNOG" id="COG0045">
    <property type="taxonomic scope" value="Bacteria"/>
</dbReference>
<dbReference type="HOGENOM" id="CLU_037430_0_2_6"/>
<dbReference type="OrthoDB" id="9802602at2"/>
<dbReference type="UniPathway" id="UPA00223">
    <property type="reaction ID" value="UER00999"/>
</dbReference>
<dbReference type="GO" id="GO:0005829">
    <property type="term" value="C:cytosol"/>
    <property type="evidence" value="ECO:0007669"/>
    <property type="project" value="TreeGrafter"/>
</dbReference>
<dbReference type="GO" id="GO:0042709">
    <property type="term" value="C:succinate-CoA ligase complex"/>
    <property type="evidence" value="ECO:0007669"/>
    <property type="project" value="TreeGrafter"/>
</dbReference>
<dbReference type="GO" id="GO:0005524">
    <property type="term" value="F:ATP binding"/>
    <property type="evidence" value="ECO:0007669"/>
    <property type="project" value="UniProtKB-UniRule"/>
</dbReference>
<dbReference type="GO" id="GO:0000287">
    <property type="term" value="F:magnesium ion binding"/>
    <property type="evidence" value="ECO:0007669"/>
    <property type="project" value="UniProtKB-UniRule"/>
</dbReference>
<dbReference type="GO" id="GO:0004775">
    <property type="term" value="F:succinate-CoA ligase (ADP-forming) activity"/>
    <property type="evidence" value="ECO:0007669"/>
    <property type="project" value="UniProtKB-UniRule"/>
</dbReference>
<dbReference type="GO" id="GO:0004776">
    <property type="term" value="F:succinate-CoA ligase (GDP-forming) activity"/>
    <property type="evidence" value="ECO:0007669"/>
    <property type="project" value="RHEA"/>
</dbReference>
<dbReference type="GO" id="GO:0006104">
    <property type="term" value="P:succinyl-CoA metabolic process"/>
    <property type="evidence" value="ECO:0007669"/>
    <property type="project" value="TreeGrafter"/>
</dbReference>
<dbReference type="GO" id="GO:0006099">
    <property type="term" value="P:tricarboxylic acid cycle"/>
    <property type="evidence" value="ECO:0007669"/>
    <property type="project" value="UniProtKB-UniRule"/>
</dbReference>
<dbReference type="FunFam" id="3.30.1490.20:FF:000002">
    <property type="entry name" value="Succinate--CoA ligase [ADP-forming] subunit beta"/>
    <property type="match status" value="1"/>
</dbReference>
<dbReference type="FunFam" id="3.30.470.20:FF:000002">
    <property type="entry name" value="Succinate--CoA ligase [ADP-forming] subunit beta"/>
    <property type="match status" value="1"/>
</dbReference>
<dbReference type="FunFam" id="3.40.50.261:FF:000001">
    <property type="entry name" value="Succinate--CoA ligase [ADP-forming] subunit beta"/>
    <property type="match status" value="1"/>
</dbReference>
<dbReference type="Gene3D" id="3.30.1490.20">
    <property type="entry name" value="ATP-grasp fold, A domain"/>
    <property type="match status" value="1"/>
</dbReference>
<dbReference type="Gene3D" id="3.30.470.20">
    <property type="entry name" value="ATP-grasp fold, B domain"/>
    <property type="match status" value="1"/>
</dbReference>
<dbReference type="Gene3D" id="3.40.50.261">
    <property type="entry name" value="Succinyl-CoA synthetase domains"/>
    <property type="match status" value="1"/>
</dbReference>
<dbReference type="HAMAP" id="MF_00558">
    <property type="entry name" value="Succ_CoA_beta"/>
    <property type="match status" value="1"/>
</dbReference>
<dbReference type="InterPro" id="IPR011761">
    <property type="entry name" value="ATP-grasp"/>
</dbReference>
<dbReference type="InterPro" id="IPR013650">
    <property type="entry name" value="ATP-grasp_succ-CoA_synth-type"/>
</dbReference>
<dbReference type="InterPro" id="IPR013815">
    <property type="entry name" value="ATP_grasp_subdomain_1"/>
</dbReference>
<dbReference type="InterPro" id="IPR017866">
    <property type="entry name" value="Succ-CoA_synthase_bsu_CS"/>
</dbReference>
<dbReference type="InterPro" id="IPR005811">
    <property type="entry name" value="SUCC_ACL_C"/>
</dbReference>
<dbReference type="InterPro" id="IPR005809">
    <property type="entry name" value="Succ_CoA_ligase-like_bsu"/>
</dbReference>
<dbReference type="InterPro" id="IPR016102">
    <property type="entry name" value="Succinyl-CoA_synth-like"/>
</dbReference>
<dbReference type="NCBIfam" id="NF001913">
    <property type="entry name" value="PRK00696.1"/>
    <property type="match status" value="1"/>
</dbReference>
<dbReference type="NCBIfam" id="TIGR01016">
    <property type="entry name" value="sucCoAbeta"/>
    <property type="match status" value="1"/>
</dbReference>
<dbReference type="PANTHER" id="PTHR11815:SF10">
    <property type="entry name" value="SUCCINATE--COA LIGASE [GDP-FORMING] SUBUNIT BETA, MITOCHONDRIAL"/>
    <property type="match status" value="1"/>
</dbReference>
<dbReference type="PANTHER" id="PTHR11815">
    <property type="entry name" value="SUCCINYL-COA SYNTHETASE BETA CHAIN"/>
    <property type="match status" value="1"/>
</dbReference>
<dbReference type="Pfam" id="PF08442">
    <property type="entry name" value="ATP-grasp_2"/>
    <property type="match status" value="1"/>
</dbReference>
<dbReference type="Pfam" id="PF00549">
    <property type="entry name" value="Ligase_CoA"/>
    <property type="match status" value="1"/>
</dbReference>
<dbReference type="PIRSF" id="PIRSF001554">
    <property type="entry name" value="SucCS_beta"/>
    <property type="match status" value="1"/>
</dbReference>
<dbReference type="SUPFAM" id="SSF56059">
    <property type="entry name" value="Glutathione synthetase ATP-binding domain-like"/>
    <property type="match status" value="1"/>
</dbReference>
<dbReference type="SUPFAM" id="SSF52210">
    <property type="entry name" value="Succinyl-CoA synthetase domains"/>
    <property type="match status" value="1"/>
</dbReference>
<dbReference type="PROSITE" id="PS50975">
    <property type="entry name" value="ATP_GRASP"/>
    <property type="match status" value="1"/>
</dbReference>
<dbReference type="PROSITE" id="PS01217">
    <property type="entry name" value="SUCCINYL_COA_LIG_3"/>
    <property type="match status" value="1"/>
</dbReference>
<organism>
    <name type="scientific">Hydrogenovibrio crunogenus (strain DSM 25203 / XCL-2)</name>
    <name type="common">Thiomicrospira crunogena</name>
    <dbReference type="NCBI Taxonomy" id="317025"/>
    <lineage>
        <taxon>Bacteria</taxon>
        <taxon>Pseudomonadati</taxon>
        <taxon>Pseudomonadota</taxon>
        <taxon>Gammaproteobacteria</taxon>
        <taxon>Thiotrichales</taxon>
        <taxon>Piscirickettsiaceae</taxon>
        <taxon>Hydrogenovibrio</taxon>
    </lineage>
</organism>
<accession>Q31FV4</accession>
<name>SUCC_HYDCU</name>
<protein>
    <recommendedName>
        <fullName evidence="1">Succinate--CoA ligase [ADP-forming] subunit beta</fullName>
        <ecNumber evidence="1">6.2.1.5</ecNumber>
    </recommendedName>
    <alternativeName>
        <fullName evidence="1">Succinyl-CoA synthetase subunit beta</fullName>
        <shortName evidence="1">SCS-beta</shortName>
    </alternativeName>
</protein>
<feature type="chain" id="PRO_1000082253" description="Succinate--CoA ligase [ADP-forming] subunit beta">
    <location>
        <begin position="1"/>
        <end position="390"/>
    </location>
</feature>
<feature type="domain" description="ATP-grasp" evidence="1">
    <location>
        <begin position="9"/>
        <end position="244"/>
    </location>
</feature>
<feature type="binding site" evidence="1">
    <location>
        <position position="46"/>
    </location>
    <ligand>
        <name>ATP</name>
        <dbReference type="ChEBI" id="CHEBI:30616"/>
    </ligand>
</feature>
<feature type="binding site" evidence="1">
    <location>
        <position position="99"/>
    </location>
    <ligand>
        <name>ATP</name>
        <dbReference type="ChEBI" id="CHEBI:30616"/>
    </ligand>
</feature>
<feature type="binding site" evidence="1">
    <location>
        <position position="102"/>
    </location>
    <ligand>
        <name>ATP</name>
        <dbReference type="ChEBI" id="CHEBI:30616"/>
    </ligand>
</feature>
<feature type="binding site" evidence="1">
    <location>
        <position position="107"/>
    </location>
    <ligand>
        <name>ATP</name>
        <dbReference type="ChEBI" id="CHEBI:30616"/>
    </ligand>
</feature>
<feature type="binding site" evidence="1">
    <location>
        <position position="199"/>
    </location>
    <ligand>
        <name>Mg(2+)</name>
        <dbReference type="ChEBI" id="CHEBI:18420"/>
    </ligand>
</feature>
<feature type="binding site" evidence="1">
    <location>
        <position position="213"/>
    </location>
    <ligand>
        <name>Mg(2+)</name>
        <dbReference type="ChEBI" id="CHEBI:18420"/>
    </ligand>
</feature>
<feature type="binding site" evidence="1">
    <location>
        <position position="264"/>
    </location>
    <ligand>
        <name>substrate</name>
        <note>ligand shared with subunit alpha</note>
    </ligand>
</feature>
<feature type="binding site" evidence="1">
    <location>
        <begin position="321"/>
        <end position="323"/>
    </location>
    <ligand>
        <name>substrate</name>
        <note>ligand shared with subunit alpha</note>
    </ligand>
</feature>
<sequence length="390" mass="41269">MNLHEYQAKSLFQQYGIPVPKGVMINDLADLDAALGQIDSKGWVVKAQIHAGARGKAGGVKLVETAEEAEQAASELLGSSLATIQTAGKALPINALLIEQTLDIYQEFYLSLMVDRVTKTHTFVISAAGGMDIELVAEASPEKILSVHVDPTVGLMPYQCREIAFALGLTGTAFKQMASVMQGFYQLALDKDVSLLEINPLVLTAENELVALDAKVNIDSNALYRQPGLVEMRDISQEDVREAKAADHQLNYIALDGNIGCMVNGAGLAMATMDLIKLNGGEPANFLDVGGGATPERVAEAFKLILSSSDVQSILVNIFGGIVRCDLIADGIIQAVQEVGLTIPVVVRLEGTNVTLGKEKLANSGLSIITADGLADAAEKVVAVALEANQ</sequence>
<keyword id="KW-0067">ATP-binding</keyword>
<keyword id="KW-0436">Ligase</keyword>
<keyword id="KW-0460">Magnesium</keyword>
<keyword id="KW-0479">Metal-binding</keyword>
<keyword id="KW-0547">Nucleotide-binding</keyword>
<keyword id="KW-0816">Tricarboxylic acid cycle</keyword>
<reference key="1">
    <citation type="journal article" date="2006" name="PLoS Biol.">
        <title>The genome of deep-sea vent chemolithoautotroph Thiomicrospira crunogena XCL-2.</title>
        <authorList>
            <person name="Scott K.M."/>
            <person name="Sievert S.M."/>
            <person name="Abril F.N."/>
            <person name="Ball L.A."/>
            <person name="Barrett C.J."/>
            <person name="Blake R.A."/>
            <person name="Boller A.J."/>
            <person name="Chain P.S.G."/>
            <person name="Clark J.A."/>
            <person name="Davis C.R."/>
            <person name="Detter C."/>
            <person name="Do K.F."/>
            <person name="Dobrinski K.P."/>
            <person name="Faza B.I."/>
            <person name="Fitzpatrick K.A."/>
            <person name="Freyermuth S.K."/>
            <person name="Harmer T.L."/>
            <person name="Hauser L.J."/>
            <person name="Huegler M."/>
            <person name="Kerfeld C.A."/>
            <person name="Klotz M.G."/>
            <person name="Kong W.W."/>
            <person name="Land M."/>
            <person name="Lapidus A."/>
            <person name="Larimer F.W."/>
            <person name="Longo D.L."/>
            <person name="Lucas S."/>
            <person name="Malfatti S.A."/>
            <person name="Massey S.E."/>
            <person name="Martin D.D."/>
            <person name="McCuddin Z."/>
            <person name="Meyer F."/>
            <person name="Moore J.L."/>
            <person name="Ocampo L.H. Jr."/>
            <person name="Paul J.H."/>
            <person name="Paulsen I.T."/>
            <person name="Reep D.K."/>
            <person name="Ren Q."/>
            <person name="Ross R.L."/>
            <person name="Sato P.Y."/>
            <person name="Thomas P."/>
            <person name="Tinkham L.E."/>
            <person name="Zeruth G.T."/>
        </authorList>
    </citation>
    <scope>NUCLEOTIDE SEQUENCE [LARGE SCALE GENOMIC DNA]</scope>
    <source>
        <strain>DSM 25203 / XCL-2</strain>
    </source>
</reference>
<comment type="function">
    <text evidence="1">Succinyl-CoA synthetase functions in the citric acid cycle (TCA), coupling the hydrolysis of succinyl-CoA to the synthesis of either ATP or GTP and thus represents the only step of substrate-level phosphorylation in the TCA. The beta subunit provides nucleotide specificity of the enzyme and binds the substrate succinate, while the binding sites for coenzyme A and phosphate are found in the alpha subunit.</text>
</comment>
<comment type="catalytic activity">
    <reaction evidence="1">
        <text>succinate + ATP + CoA = succinyl-CoA + ADP + phosphate</text>
        <dbReference type="Rhea" id="RHEA:17661"/>
        <dbReference type="ChEBI" id="CHEBI:30031"/>
        <dbReference type="ChEBI" id="CHEBI:30616"/>
        <dbReference type="ChEBI" id="CHEBI:43474"/>
        <dbReference type="ChEBI" id="CHEBI:57287"/>
        <dbReference type="ChEBI" id="CHEBI:57292"/>
        <dbReference type="ChEBI" id="CHEBI:456216"/>
        <dbReference type="EC" id="6.2.1.5"/>
    </reaction>
    <physiologicalReaction direction="right-to-left" evidence="1">
        <dbReference type="Rhea" id="RHEA:17663"/>
    </physiologicalReaction>
</comment>
<comment type="catalytic activity">
    <reaction evidence="1">
        <text>GTP + succinate + CoA = succinyl-CoA + GDP + phosphate</text>
        <dbReference type="Rhea" id="RHEA:22120"/>
        <dbReference type="ChEBI" id="CHEBI:30031"/>
        <dbReference type="ChEBI" id="CHEBI:37565"/>
        <dbReference type="ChEBI" id="CHEBI:43474"/>
        <dbReference type="ChEBI" id="CHEBI:57287"/>
        <dbReference type="ChEBI" id="CHEBI:57292"/>
        <dbReference type="ChEBI" id="CHEBI:58189"/>
    </reaction>
    <physiologicalReaction direction="right-to-left" evidence="1">
        <dbReference type="Rhea" id="RHEA:22122"/>
    </physiologicalReaction>
</comment>
<comment type="cofactor">
    <cofactor evidence="1">
        <name>Mg(2+)</name>
        <dbReference type="ChEBI" id="CHEBI:18420"/>
    </cofactor>
    <text evidence="1">Binds 1 Mg(2+) ion per subunit.</text>
</comment>
<comment type="pathway">
    <text evidence="1">Carbohydrate metabolism; tricarboxylic acid cycle; succinate from succinyl-CoA (ligase route): step 1/1.</text>
</comment>
<comment type="subunit">
    <text evidence="1">Heterotetramer of two alpha and two beta subunits.</text>
</comment>
<comment type="similarity">
    <text evidence="1">Belongs to the succinate/malate CoA ligase beta subunit family.</text>
</comment>
<gene>
    <name evidence="1" type="primary">sucC</name>
    <name type="ordered locus">Tcr_1374</name>
</gene>
<proteinExistence type="inferred from homology"/>